<dbReference type="EC" id="2.7.11.1"/>
<dbReference type="EMBL" id="M19412">
    <property type="protein sequence ID" value="AAA48959.1"/>
    <property type="molecule type" value="Genomic_DNA"/>
</dbReference>
<dbReference type="PIR" id="A28130">
    <property type="entry name" value="TVCHMS"/>
</dbReference>
<dbReference type="RefSeq" id="NP_001026687.1">
    <property type="nucleotide sequence ID" value="NM_001031516.1"/>
</dbReference>
<dbReference type="SMR" id="P10741"/>
<dbReference type="FunCoup" id="P10741">
    <property type="interactions" value="356"/>
</dbReference>
<dbReference type="STRING" id="9031.ENSGALP00000049891"/>
<dbReference type="GlyGen" id="P10741">
    <property type="glycosylation" value="1 site"/>
</dbReference>
<dbReference type="PaxDb" id="9031-ENSGALP00000024805"/>
<dbReference type="Ensembl" id="ENSGALT00000140696">
    <property type="protein sequence ID" value="ENSGALP00000078275"/>
    <property type="gene ID" value="ENSGALG00000065469"/>
</dbReference>
<dbReference type="GeneID" id="428537"/>
<dbReference type="KEGG" id="gga:428537"/>
<dbReference type="CTD" id="4342"/>
<dbReference type="VEuPathDB" id="HostDB:geneid_428537"/>
<dbReference type="eggNOG" id="KOG0192">
    <property type="taxonomic scope" value="Eukaryota"/>
</dbReference>
<dbReference type="HOGENOM" id="CLU_000288_7_35_1"/>
<dbReference type="InParanoid" id="P10741"/>
<dbReference type="OrthoDB" id="4062651at2759"/>
<dbReference type="PhylomeDB" id="P10741"/>
<dbReference type="BRENDA" id="2.7.10.2">
    <property type="organism ID" value="1306"/>
</dbReference>
<dbReference type="PRO" id="PR:P10741"/>
<dbReference type="Proteomes" id="UP000000539">
    <property type="component" value="Chromosome 2"/>
</dbReference>
<dbReference type="GO" id="GO:0005737">
    <property type="term" value="C:cytoplasm"/>
    <property type="evidence" value="ECO:0000318"/>
    <property type="project" value="GO_Central"/>
</dbReference>
<dbReference type="GO" id="GO:0005524">
    <property type="term" value="F:ATP binding"/>
    <property type="evidence" value="ECO:0007669"/>
    <property type="project" value="UniProtKB-KW"/>
</dbReference>
<dbReference type="GO" id="GO:0004709">
    <property type="term" value="F:MAP kinase kinase kinase activity"/>
    <property type="evidence" value="ECO:0000250"/>
    <property type="project" value="UniProtKB"/>
</dbReference>
<dbReference type="GO" id="GO:0004672">
    <property type="term" value="F:protein kinase activity"/>
    <property type="evidence" value="ECO:0000318"/>
    <property type="project" value="GO_Central"/>
</dbReference>
<dbReference type="GO" id="GO:0106310">
    <property type="term" value="F:protein serine kinase activity"/>
    <property type="evidence" value="ECO:0007669"/>
    <property type="project" value="RHEA"/>
</dbReference>
<dbReference type="GO" id="GO:0000165">
    <property type="term" value="P:MAPK cascade"/>
    <property type="evidence" value="ECO:0000250"/>
    <property type="project" value="UniProtKB"/>
</dbReference>
<dbReference type="GO" id="GO:1902103">
    <property type="term" value="P:negative regulation of metaphase/anaphase transition of meiotic cell cycle"/>
    <property type="evidence" value="ECO:0000318"/>
    <property type="project" value="GO_Central"/>
</dbReference>
<dbReference type="GO" id="GO:0043410">
    <property type="term" value="P:positive regulation of MAPK cascade"/>
    <property type="evidence" value="ECO:0000318"/>
    <property type="project" value="GO_Central"/>
</dbReference>
<dbReference type="GO" id="GO:0046777">
    <property type="term" value="P:protein autophosphorylation"/>
    <property type="evidence" value="ECO:0000250"/>
    <property type="project" value="UniProtKB"/>
</dbReference>
<dbReference type="GO" id="GO:0007165">
    <property type="term" value="P:signal transduction"/>
    <property type="evidence" value="ECO:0000318"/>
    <property type="project" value="GO_Central"/>
</dbReference>
<dbReference type="CDD" id="cd13979">
    <property type="entry name" value="STKc_Mos"/>
    <property type="match status" value="1"/>
</dbReference>
<dbReference type="FunFam" id="1.10.510.10:FF:000490">
    <property type="entry name" value="Proto-oncogene serine/threonine-protein kinase mos"/>
    <property type="match status" value="1"/>
</dbReference>
<dbReference type="FunFam" id="3.30.200.20:FF:000316">
    <property type="entry name" value="Proto-oncogene serine/threonine-protein kinase mos"/>
    <property type="match status" value="1"/>
</dbReference>
<dbReference type="Gene3D" id="3.30.200.20">
    <property type="entry name" value="Phosphorylase Kinase, domain 1"/>
    <property type="match status" value="1"/>
</dbReference>
<dbReference type="Gene3D" id="1.10.510.10">
    <property type="entry name" value="Transferase(Phosphotransferase) domain 1"/>
    <property type="match status" value="1"/>
</dbReference>
<dbReference type="InterPro" id="IPR011009">
    <property type="entry name" value="Kinase-like_dom_sf"/>
</dbReference>
<dbReference type="InterPro" id="IPR000719">
    <property type="entry name" value="Prot_kinase_dom"/>
</dbReference>
<dbReference type="InterPro" id="IPR017441">
    <property type="entry name" value="Protein_kinase_ATP_BS"/>
</dbReference>
<dbReference type="InterPro" id="IPR008271">
    <property type="entry name" value="Ser/Thr_kinase_AS"/>
</dbReference>
<dbReference type="InterPro" id="IPR051681">
    <property type="entry name" value="Ser/Thr_Kinases-Pseudokinases"/>
</dbReference>
<dbReference type="PANTHER" id="PTHR44329">
    <property type="entry name" value="SERINE/THREONINE-PROTEIN KINASE TNNI3K-RELATED"/>
    <property type="match status" value="1"/>
</dbReference>
<dbReference type="PANTHER" id="PTHR44329:SF285">
    <property type="entry name" value="V-MOS MOLONEY MURINE SARCOMA VIRAL ONCO HOMOLOG"/>
    <property type="match status" value="1"/>
</dbReference>
<dbReference type="Pfam" id="PF00069">
    <property type="entry name" value="Pkinase"/>
    <property type="match status" value="1"/>
</dbReference>
<dbReference type="SMART" id="SM00220">
    <property type="entry name" value="S_TKc"/>
    <property type="match status" value="1"/>
</dbReference>
<dbReference type="SUPFAM" id="SSF56112">
    <property type="entry name" value="Protein kinase-like (PK-like)"/>
    <property type="match status" value="1"/>
</dbReference>
<dbReference type="PROSITE" id="PS00107">
    <property type="entry name" value="PROTEIN_KINASE_ATP"/>
    <property type="match status" value="1"/>
</dbReference>
<dbReference type="PROSITE" id="PS50011">
    <property type="entry name" value="PROTEIN_KINASE_DOM"/>
    <property type="match status" value="1"/>
</dbReference>
<dbReference type="PROSITE" id="PS00108">
    <property type="entry name" value="PROTEIN_KINASE_ST"/>
    <property type="match status" value="1"/>
</dbReference>
<gene>
    <name type="primary">MOS</name>
</gene>
<reference key="1">
    <citation type="journal article" date="1988" name="Mol. Cell. Biol.">
        <title>Chicken homolog of the mos proto-oncogene.</title>
        <authorList>
            <person name="Schmidt M."/>
            <person name="Oskarsson M.K."/>
            <person name="Dunn J.K."/>
            <person name="Blair D.G."/>
            <person name="Hughes S."/>
            <person name="Propst F."/>
            <person name="Vande Woude G.F."/>
        </authorList>
    </citation>
    <scope>NUCLEOTIDE SEQUENCE [GENOMIC DNA]</scope>
</reference>
<sequence>MPSPIPFNSFLPLELSPSADLRPCSSPVVIPGKDGKAFLGGTPSPRTRRLPPRLAWCSIDWDRLCLLQPLGSGGFGAVYKATYHGVTVAVKQVKKSSKNRLASRQSFWAELNVARLQHDNVVRVVAASTCAPASQNSLGTIIMEYVGNVTLHHVIYGTRDAWRQGEEEEGGCGRKALSMAEAVCYSCDIVTGLAFLHSQGIVHLDLKPANILITEHGACKIGDFGCSQRLEEGLSQSHHVCQQGGTYTHRAPELLKGERVTAKADIYSFAITLWQIVMREQPYLGERQYVLYAVVAYNLRPPLAAAIFHESAVGQRLRSIISCCWKADVEERLSAAQLLPSLRALKENL</sequence>
<comment type="function">
    <text evidence="1">Serine/threonine kinase involved in the regulation of MAPK signaling.</text>
</comment>
<comment type="catalytic activity">
    <reaction>
        <text>L-seryl-[protein] + ATP = O-phospho-L-seryl-[protein] + ADP + H(+)</text>
        <dbReference type="Rhea" id="RHEA:17989"/>
        <dbReference type="Rhea" id="RHEA-COMP:9863"/>
        <dbReference type="Rhea" id="RHEA-COMP:11604"/>
        <dbReference type="ChEBI" id="CHEBI:15378"/>
        <dbReference type="ChEBI" id="CHEBI:29999"/>
        <dbReference type="ChEBI" id="CHEBI:30616"/>
        <dbReference type="ChEBI" id="CHEBI:83421"/>
        <dbReference type="ChEBI" id="CHEBI:456216"/>
        <dbReference type="EC" id="2.7.11.1"/>
    </reaction>
</comment>
<comment type="catalytic activity">
    <reaction>
        <text>L-threonyl-[protein] + ATP = O-phospho-L-threonyl-[protein] + ADP + H(+)</text>
        <dbReference type="Rhea" id="RHEA:46608"/>
        <dbReference type="Rhea" id="RHEA-COMP:11060"/>
        <dbReference type="Rhea" id="RHEA-COMP:11605"/>
        <dbReference type="ChEBI" id="CHEBI:15378"/>
        <dbReference type="ChEBI" id="CHEBI:30013"/>
        <dbReference type="ChEBI" id="CHEBI:30616"/>
        <dbReference type="ChEBI" id="CHEBI:61977"/>
        <dbReference type="ChEBI" id="CHEBI:456216"/>
        <dbReference type="EC" id="2.7.11.1"/>
    </reaction>
</comment>
<comment type="subcellular location">
    <subcellularLocation>
        <location evidence="1">Cytoplasm</location>
    </subcellularLocation>
</comment>
<comment type="similarity">
    <text evidence="2">Belongs to the protein kinase superfamily. Ser/Thr protein kinase family.</text>
</comment>
<accession>P10741</accession>
<name>MOS_CHICK</name>
<feature type="chain" id="PRO_0000086351" description="Serine/threonine-protein kinase mos">
    <location>
        <begin position="1"/>
        <end position="349"/>
    </location>
</feature>
<feature type="domain" description="Protein kinase" evidence="2">
    <location>
        <begin position="64"/>
        <end position="345"/>
    </location>
</feature>
<feature type="active site" description="Proton acceptor" evidence="2 3">
    <location>
        <position position="205"/>
    </location>
</feature>
<feature type="binding site" evidence="2">
    <location>
        <begin position="70"/>
        <end position="78"/>
    </location>
    <ligand>
        <name>ATP</name>
        <dbReference type="ChEBI" id="CHEBI:30616"/>
    </ligand>
</feature>
<feature type="binding site" evidence="2">
    <location>
        <position position="91"/>
    </location>
    <ligand>
        <name>ATP</name>
        <dbReference type="ChEBI" id="CHEBI:30616"/>
    </ligand>
</feature>
<keyword id="KW-0067">ATP-binding</keyword>
<keyword id="KW-0963">Cytoplasm</keyword>
<keyword id="KW-0418">Kinase</keyword>
<keyword id="KW-0547">Nucleotide-binding</keyword>
<keyword id="KW-1185">Reference proteome</keyword>
<keyword id="KW-0723">Serine/threonine-protein kinase</keyword>
<keyword id="KW-0808">Transferase</keyword>
<proteinExistence type="inferred from homology"/>
<organism>
    <name type="scientific">Gallus gallus</name>
    <name type="common">Chicken</name>
    <dbReference type="NCBI Taxonomy" id="9031"/>
    <lineage>
        <taxon>Eukaryota</taxon>
        <taxon>Metazoa</taxon>
        <taxon>Chordata</taxon>
        <taxon>Craniata</taxon>
        <taxon>Vertebrata</taxon>
        <taxon>Euteleostomi</taxon>
        <taxon>Archelosauria</taxon>
        <taxon>Archosauria</taxon>
        <taxon>Dinosauria</taxon>
        <taxon>Saurischia</taxon>
        <taxon>Theropoda</taxon>
        <taxon>Coelurosauria</taxon>
        <taxon>Aves</taxon>
        <taxon>Neognathae</taxon>
        <taxon>Galloanserae</taxon>
        <taxon>Galliformes</taxon>
        <taxon>Phasianidae</taxon>
        <taxon>Phasianinae</taxon>
        <taxon>Gallus</taxon>
    </lineage>
</organism>
<protein>
    <recommendedName>
        <fullName>Serine/threonine-protein kinase mos</fullName>
        <ecNumber>2.7.11.1</ecNumber>
    </recommendedName>
    <alternativeName>
        <fullName>Oocyte maturation factor mos</fullName>
    </alternativeName>
</protein>
<evidence type="ECO:0000250" key="1">
    <source>
        <dbReference type="UniProtKB" id="P00540"/>
    </source>
</evidence>
<evidence type="ECO:0000255" key="2">
    <source>
        <dbReference type="PROSITE-ProRule" id="PRU00159"/>
    </source>
</evidence>
<evidence type="ECO:0000255" key="3">
    <source>
        <dbReference type="PROSITE-ProRule" id="PRU10027"/>
    </source>
</evidence>